<reference key="1">
    <citation type="journal article" date="2006" name="Lancet">
        <title>Complete genome sequence of USA300, an epidemic clone of community-acquired meticillin-resistant Staphylococcus aureus.</title>
        <authorList>
            <person name="Diep B.A."/>
            <person name="Gill S.R."/>
            <person name="Chang R.F."/>
            <person name="Phan T.H."/>
            <person name="Chen J.H."/>
            <person name="Davidson M.G."/>
            <person name="Lin F."/>
            <person name="Lin J."/>
            <person name="Carleton H.A."/>
            <person name="Mongodin E.F."/>
            <person name="Sensabaugh G.F."/>
            <person name="Perdreau-Remington F."/>
        </authorList>
    </citation>
    <scope>NUCLEOTIDE SEQUENCE [LARGE SCALE GENOMIC DNA]</scope>
    <source>
        <strain>USA300</strain>
    </source>
</reference>
<dbReference type="EMBL" id="CP000255">
    <property type="protein sequence ID" value="ABD21044.1"/>
    <property type="molecule type" value="Genomic_DNA"/>
</dbReference>
<dbReference type="RefSeq" id="WP_000289213.1">
    <property type="nucleotide sequence ID" value="NZ_CP027476.1"/>
</dbReference>
<dbReference type="SMR" id="Q2FEB2"/>
<dbReference type="KEGG" id="saa:SAUSA300_2331"/>
<dbReference type="HOGENOM" id="CLU_083287_3_2_9"/>
<dbReference type="OMA" id="WEHETLT"/>
<dbReference type="Proteomes" id="UP000001939">
    <property type="component" value="Chromosome"/>
</dbReference>
<dbReference type="GO" id="GO:0005737">
    <property type="term" value="C:cytoplasm"/>
    <property type="evidence" value="ECO:0007669"/>
    <property type="project" value="UniProtKB-SubCell"/>
</dbReference>
<dbReference type="GO" id="GO:0003677">
    <property type="term" value="F:DNA binding"/>
    <property type="evidence" value="ECO:0007669"/>
    <property type="project" value="UniProtKB-KW"/>
</dbReference>
<dbReference type="GO" id="GO:0003700">
    <property type="term" value="F:DNA-binding transcription factor activity"/>
    <property type="evidence" value="ECO:0007669"/>
    <property type="project" value="InterPro"/>
</dbReference>
<dbReference type="FunFam" id="1.10.10.10:FF:000163">
    <property type="entry name" value="MarR family transcriptional regulator"/>
    <property type="match status" value="1"/>
</dbReference>
<dbReference type="Gene3D" id="1.10.10.10">
    <property type="entry name" value="Winged helix-like DNA-binding domain superfamily/Winged helix DNA-binding domain"/>
    <property type="match status" value="1"/>
</dbReference>
<dbReference type="InterPro" id="IPR000835">
    <property type="entry name" value="HTH_MarR-typ"/>
</dbReference>
<dbReference type="InterPro" id="IPR055166">
    <property type="entry name" value="Transc_reg_Sar_Rot_HTH"/>
</dbReference>
<dbReference type="InterPro" id="IPR036388">
    <property type="entry name" value="WH-like_DNA-bd_sf"/>
</dbReference>
<dbReference type="InterPro" id="IPR036390">
    <property type="entry name" value="WH_DNA-bd_sf"/>
</dbReference>
<dbReference type="PANTHER" id="PTHR42756">
    <property type="entry name" value="TRANSCRIPTIONAL REGULATOR, MARR"/>
    <property type="match status" value="1"/>
</dbReference>
<dbReference type="PANTHER" id="PTHR42756:SF1">
    <property type="entry name" value="TRANSCRIPTIONAL REPRESSOR OF EMRAB OPERON"/>
    <property type="match status" value="1"/>
</dbReference>
<dbReference type="Pfam" id="PF22381">
    <property type="entry name" value="Staph_reg_Sar_Rot"/>
    <property type="match status" value="1"/>
</dbReference>
<dbReference type="PRINTS" id="PR00598">
    <property type="entry name" value="HTHMARR"/>
</dbReference>
<dbReference type="SMART" id="SM00347">
    <property type="entry name" value="HTH_MARR"/>
    <property type="match status" value="1"/>
</dbReference>
<dbReference type="SUPFAM" id="SSF46785">
    <property type="entry name" value="Winged helix' DNA-binding domain"/>
    <property type="match status" value="1"/>
</dbReference>
<dbReference type="PROSITE" id="PS50995">
    <property type="entry name" value="HTH_MARR_2"/>
    <property type="match status" value="1"/>
</dbReference>
<protein>
    <recommendedName>
        <fullName>HTH-type transcriptional regulator SarZ</fullName>
    </recommendedName>
    <alternativeName>
        <fullName>Staphylococcal accessory regulator Z</fullName>
    </alternativeName>
</protein>
<accession>Q2FEB2</accession>
<keyword id="KW-0010">Activator</keyword>
<keyword id="KW-0963">Cytoplasm</keyword>
<keyword id="KW-0238">DNA-binding</keyword>
<keyword id="KW-0804">Transcription</keyword>
<keyword id="KW-0805">Transcription regulation</keyword>
<keyword id="KW-0843">Virulence</keyword>
<evidence type="ECO:0000250" key="1"/>
<evidence type="ECO:0000255" key="2">
    <source>
        <dbReference type="PROSITE-ProRule" id="PRU00345"/>
    </source>
</evidence>
<evidence type="ECO:0000305" key="3"/>
<organism>
    <name type="scientific">Staphylococcus aureus (strain USA300)</name>
    <dbReference type="NCBI Taxonomy" id="367830"/>
    <lineage>
        <taxon>Bacteria</taxon>
        <taxon>Bacillati</taxon>
        <taxon>Bacillota</taxon>
        <taxon>Bacilli</taxon>
        <taxon>Bacillales</taxon>
        <taxon>Staphylococcaceae</taxon>
        <taxon>Staphylococcus</taxon>
    </lineage>
</organism>
<proteinExistence type="inferred from homology"/>
<comment type="function">
    <text evidence="1">Activates transcription of virulence factors alpha- and beta hemolysin genes (hla and hlb). Also, activates RNAIII expression, a central regulator transcribed from the agr locus (By similarity).</text>
</comment>
<comment type="subcellular location">
    <subcellularLocation>
        <location evidence="1">Cytoplasm</location>
    </subcellularLocation>
</comment>
<comment type="induction">
    <text evidence="1">Transcriptionally activated by CvfA.</text>
</comment>
<comment type="similarity">
    <text evidence="3">Belongs to the SarZ family.</text>
</comment>
<feature type="chain" id="PRO_0000284462" description="HTH-type transcriptional regulator SarZ">
    <location>
        <begin position="1"/>
        <end position="148"/>
    </location>
</feature>
<feature type="domain" description="HTH marR-type" evidence="2">
    <location>
        <begin position="9"/>
        <end position="139"/>
    </location>
</feature>
<feature type="DNA-binding region" description="H-T-H motif" evidence="2">
    <location>
        <begin position="55"/>
        <end position="78"/>
    </location>
</feature>
<gene>
    <name type="primary">sarZ</name>
    <name type="ordered locus">SAUSA300_2331</name>
</gene>
<sequence>MYVENSYLSKQLCFLFYVSSKEIIKKYTNYLKEYDLTYTGYIVLMAIENDEKLNIKKLGERVFLDSGTLTPLLKKLEKKDYVVRTREEKDERNLQISLTEQGKAIKSPLAEISVKVFNEFNISEREASDIINNLRNFVSKNFDYSDKK</sequence>
<name>SARZ_STAA3</name>